<reference key="1">
    <citation type="journal article" date="1995" name="Biochem. J.">
        <title>Characterization of three types of human alpha s1-casein mRNA transcripts.</title>
        <authorList>
            <person name="Johnsen L.B."/>
            <person name="Rasmussen L.K."/>
            <person name="Petersen T.E."/>
            <person name="Berglund L."/>
        </authorList>
    </citation>
    <scope>NUCLEOTIDE SEQUENCE [MRNA] (ISOFORMS 1; 2 AND 3)</scope>
    <source>
        <tissue>Mammary gland</tissue>
    </source>
</reference>
<reference key="2">
    <citation type="submission" date="1995-03" db="EMBL/GenBank/DDBJ databases">
        <authorList>
            <person name="Yu D.Y."/>
            <person name="Jeong S."/>
            <person name="Lee K.K."/>
            <person name="Lonnerdal B."/>
        </authorList>
    </citation>
    <scope>NUCLEOTIDE SEQUENCE [MRNA] (ISOFORM 1)</scope>
    <source>
        <tissue>Mammary gland</tissue>
    </source>
</reference>
<reference key="3">
    <citation type="submission" date="2005-05" db="EMBL/GenBank/DDBJ databases">
        <authorList>
            <person name="Lin L."/>
            <person name="Nong W."/>
            <person name="Zhou G."/>
            <person name="Ke R."/>
            <person name="Shen C."/>
            <person name="Zhong G."/>
            <person name="Zheng Z."/>
            <person name="Liang M."/>
            <person name="Wen S."/>
            <person name="Li H."/>
            <person name="Yang S."/>
        </authorList>
    </citation>
    <scope>NUCLEOTIDE SEQUENCE [MRNA] (ISOFORM 4)</scope>
</reference>
<reference key="4">
    <citation type="journal article" date="2005" name="Nature">
        <title>Generation and annotation of the DNA sequences of human chromosomes 2 and 4.</title>
        <authorList>
            <person name="Hillier L.W."/>
            <person name="Graves T.A."/>
            <person name="Fulton R.S."/>
            <person name="Fulton L.A."/>
            <person name="Pepin K.H."/>
            <person name="Minx P."/>
            <person name="Wagner-McPherson C."/>
            <person name="Layman D."/>
            <person name="Wylie K."/>
            <person name="Sekhon M."/>
            <person name="Becker M.C."/>
            <person name="Fewell G.A."/>
            <person name="Delehaunty K.D."/>
            <person name="Miner T.L."/>
            <person name="Nash W.E."/>
            <person name="Kremitzki C."/>
            <person name="Oddy L."/>
            <person name="Du H."/>
            <person name="Sun H."/>
            <person name="Bradshaw-Cordum H."/>
            <person name="Ali J."/>
            <person name="Carter J."/>
            <person name="Cordes M."/>
            <person name="Harris A."/>
            <person name="Isak A."/>
            <person name="van Brunt A."/>
            <person name="Nguyen C."/>
            <person name="Du F."/>
            <person name="Courtney L."/>
            <person name="Kalicki J."/>
            <person name="Ozersky P."/>
            <person name="Abbott S."/>
            <person name="Armstrong J."/>
            <person name="Belter E.A."/>
            <person name="Caruso L."/>
            <person name="Cedroni M."/>
            <person name="Cotton M."/>
            <person name="Davidson T."/>
            <person name="Desai A."/>
            <person name="Elliott G."/>
            <person name="Erb T."/>
            <person name="Fronick C."/>
            <person name="Gaige T."/>
            <person name="Haakenson W."/>
            <person name="Haglund K."/>
            <person name="Holmes A."/>
            <person name="Harkins R."/>
            <person name="Kim K."/>
            <person name="Kruchowski S.S."/>
            <person name="Strong C.M."/>
            <person name="Grewal N."/>
            <person name="Goyea E."/>
            <person name="Hou S."/>
            <person name="Levy A."/>
            <person name="Martinka S."/>
            <person name="Mead K."/>
            <person name="McLellan M.D."/>
            <person name="Meyer R."/>
            <person name="Randall-Maher J."/>
            <person name="Tomlinson C."/>
            <person name="Dauphin-Kohlberg S."/>
            <person name="Kozlowicz-Reilly A."/>
            <person name="Shah N."/>
            <person name="Swearengen-Shahid S."/>
            <person name="Snider J."/>
            <person name="Strong J.T."/>
            <person name="Thompson J."/>
            <person name="Yoakum M."/>
            <person name="Leonard S."/>
            <person name="Pearman C."/>
            <person name="Trani L."/>
            <person name="Radionenko M."/>
            <person name="Waligorski J.E."/>
            <person name="Wang C."/>
            <person name="Rock S.M."/>
            <person name="Tin-Wollam A.-M."/>
            <person name="Maupin R."/>
            <person name="Latreille P."/>
            <person name="Wendl M.C."/>
            <person name="Yang S.-P."/>
            <person name="Pohl C."/>
            <person name="Wallis J.W."/>
            <person name="Spieth J."/>
            <person name="Bieri T.A."/>
            <person name="Berkowicz N."/>
            <person name="Nelson J.O."/>
            <person name="Osborne J."/>
            <person name="Ding L."/>
            <person name="Meyer R."/>
            <person name="Sabo A."/>
            <person name="Shotland Y."/>
            <person name="Sinha P."/>
            <person name="Wohldmann P.E."/>
            <person name="Cook L.L."/>
            <person name="Hickenbotham M.T."/>
            <person name="Eldred J."/>
            <person name="Williams D."/>
            <person name="Jones T.A."/>
            <person name="She X."/>
            <person name="Ciccarelli F.D."/>
            <person name="Izaurralde E."/>
            <person name="Taylor J."/>
            <person name="Schmutz J."/>
            <person name="Myers R.M."/>
            <person name="Cox D.R."/>
            <person name="Huang X."/>
            <person name="McPherson J.D."/>
            <person name="Mardis E.R."/>
            <person name="Clifton S.W."/>
            <person name="Warren W.C."/>
            <person name="Chinwalla A.T."/>
            <person name="Eddy S.R."/>
            <person name="Marra M.A."/>
            <person name="Ovcharenko I."/>
            <person name="Furey T.S."/>
            <person name="Miller W."/>
            <person name="Eichler E.E."/>
            <person name="Bork P."/>
            <person name="Suyama M."/>
            <person name="Torrents D."/>
            <person name="Waterston R.H."/>
            <person name="Wilson R.K."/>
        </authorList>
    </citation>
    <scope>NUCLEOTIDE SEQUENCE [LARGE SCALE GENOMIC DNA]</scope>
</reference>
<reference key="5">
    <citation type="submission" date="2005-07" db="EMBL/GenBank/DDBJ databases">
        <authorList>
            <person name="Mural R.J."/>
            <person name="Istrail S."/>
            <person name="Sutton G.G."/>
            <person name="Florea L."/>
            <person name="Halpern A.L."/>
            <person name="Mobarry C.M."/>
            <person name="Lippert R."/>
            <person name="Walenz B."/>
            <person name="Shatkay H."/>
            <person name="Dew I."/>
            <person name="Miller J.R."/>
            <person name="Flanigan M.J."/>
            <person name="Edwards N.J."/>
            <person name="Bolanos R."/>
            <person name="Fasulo D."/>
            <person name="Halldorsson B.V."/>
            <person name="Hannenhalli S."/>
            <person name="Turner R."/>
            <person name="Yooseph S."/>
            <person name="Lu F."/>
            <person name="Nusskern D.R."/>
            <person name="Shue B.C."/>
            <person name="Zheng X.H."/>
            <person name="Zhong F."/>
            <person name="Delcher A.L."/>
            <person name="Huson D.H."/>
            <person name="Kravitz S.A."/>
            <person name="Mouchard L."/>
            <person name="Reinert K."/>
            <person name="Remington K.A."/>
            <person name="Clark A.G."/>
            <person name="Waterman M.S."/>
            <person name="Eichler E.E."/>
            <person name="Adams M.D."/>
            <person name="Hunkapiller M.W."/>
            <person name="Myers E.W."/>
            <person name="Venter J.C."/>
        </authorList>
    </citation>
    <scope>NUCLEOTIDE SEQUENCE [LARGE SCALE GENOMIC DNA]</scope>
</reference>
<reference key="6">
    <citation type="journal article" date="2004" name="Genome Res.">
        <title>The status, quality, and expansion of the NIH full-length cDNA project: the Mammalian Gene Collection (MGC).</title>
        <authorList>
            <consortium name="The MGC Project Team"/>
        </authorList>
    </citation>
    <scope>NUCLEOTIDE SEQUENCE [LARGE SCALE MRNA] (ISOFORM 1)</scope>
    <scope>VARIANT VAL-117</scope>
</reference>
<reference key="7">
    <citation type="journal article" date="1996" name="Lait">
        <title>The gene encoding alpha s1-casein is expressed in human mammary epithelial cells during lactation.</title>
        <authorList>
            <person name="Martin P."/>
            <person name="Brignon G."/>
            <person name="Furet J.-P."/>
            <person name="Leroux C."/>
        </authorList>
    </citation>
    <scope>NUCLEOTIDE SEQUENCE [MRNA] OF 9-185 (ISOFORMS 1; 2 AND 3)</scope>
</reference>
<reference key="8">
    <citation type="journal article" date="1994" name="Biol. Chem. Hoppe-Seyler">
        <title>Human alpha S1-casein like protein: purification and N-terminal sequence determination.</title>
        <authorList>
            <person name="Cavaletto M."/>
            <person name="Cantisani A."/>
            <person name="Giuffrida G."/>
            <person name="Napolitano L."/>
            <person name="Conti A."/>
        </authorList>
    </citation>
    <scope>PROTEIN SEQUENCE OF 16-29</scope>
</reference>
<reference key="9">
    <citation type="journal article" date="1995" name="Comp. Biochem. Physiol.">
        <title>Human alpha s1-casein: purification and characterization.</title>
        <authorList>
            <person name="Rasmussen L.K."/>
            <person name="Due H.A."/>
            <person name="Petersen T.E."/>
        </authorList>
    </citation>
    <scope>PROTEIN SEQUENCE OF 16-29 AND 99-105</scope>
    <scope>CHARACTERIZATION</scope>
</reference>
<reference key="10">
    <citation type="journal article" date="2007" name="Analyst">
        <title>On studying protein phosphorylation patterns using bottom-up LC-MS/MS: the case of human alpha-casein.</title>
        <authorList>
            <person name="Kjeldsen F."/>
            <person name="Savitski M.M."/>
            <person name="Nielsen M.L."/>
            <person name="Shi L."/>
            <person name="Zubarev R.A."/>
        </authorList>
    </citation>
    <scope>PROTEIN SEQUENCE OF 27-42 AND 83-98</scope>
    <scope>PHOSPHORYLATION AT SER-33; SER-41; SER-88 AND SER-90</scope>
    <scope>IDENTIFICATION BY MASS SPECTROMETRY</scope>
</reference>
<reference key="11">
    <citation type="journal article" date="2008" name="J. Proteome Res.">
        <title>Analysis of the human casein phosphoproteome by 2-D electrophoresis and MALDI-TOF/TOF MS reveals new phosphoforms.</title>
        <authorList>
            <person name="Poth A.G."/>
            <person name="Deeth H.C."/>
            <person name="Alewood P.F."/>
            <person name="Holland J.W."/>
        </authorList>
    </citation>
    <scope>PROTEIN SEQUENCE OF 28-48</scope>
    <scope>PHOSPHORYLATION AT SER-31; SER-33; SER-41; SER-86; SER-88; SER-89; SER-90 AND SER-91</scope>
    <scope>IDENTIFICATION BY MASS SPECTROMETRY</scope>
</reference>
<reference key="12">
    <citation type="journal article" date="2003" name="Eur. J. Biochem.">
        <title>The phosphorylation pattern of human alphas1-casein is markedly different from the ruminant species.</title>
        <authorList>
            <person name="Sorensen E.S."/>
            <person name="Moller L."/>
            <person name="Vinther M."/>
            <person name="Petersen T.E."/>
            <person name="Rasmussen L.K."/>
        </authorList>
    </citation>
    <scope>PARTIAL PROTEIN SEQUENCE</scope>
    <scope>PHOSPHORYLATION AT SER-33 AND SER-41</scope>
    <scope>LACK OF GLYCOSYLATION</scope>
    <scope>IDENTIFICATION BY MASS SPECTROMETRY</scope>
</reference>
<reference key="13">
    <citation type="journal article" date="1997" name="Hum. Genet.">
        <title>Genomic organization and chromosomal localization of the human casein gene family.</title>
        <authorList>
            <person name="Fujiwara Y."/>
            <person name="Miwa M."/>
            <person name="Nogami M."/>
            <person name="Okumura K."/>
            <person name="Nobori T."/>
            <person name="Suzuki T."/>
            <person name="Ueda M."/>
        </authorList>
    </citation>
    <scope>GENOMIC ORGANIZATION</scope>
    <scope>CHROMOSOMAL LOCATION</scope>
</reference>
<reference key="14">
    <citation type="journal article" date="2010" name="Sci. Signal.">
        <title>Quantitative phosphoproteomics reveals widespread full phosphorylation site occupancy during mitosis.</title>
        <authorList>
            <person name="Olsen J.V."/>
            <person name="Vermeulen M."/>
            <person name="Santamaria A."/>
            <person name="Kumar C."/>
            <person name="Miller M.L."/>
            <person name="Jensen L.J."/>
            <person name="Gnad F."/>
            <person name="Cox J."/>
            <person name="Jensen T.S."/>
            <person name="Nigg E.A."/>
            <person name="Brunak S."/>
            <person name="Mann M."/>
        </authorList>
    </citation>
    <scope>PHOSPHORYLATION [LARGE SCALE ANALYSIS] AT SER-41</scope>
    <scope>IDENTIFICATION BY MASS SPECTROMETRY [LARGE SCALE ANALYSIS]</scope>
    <source>
        <tissue>Cervix carcinoma</tissue>
    </source>
</reference>
<gene>
    <name type="primary">CSN1S1</name>
    <name type="synonym">CASA</name>
    <name type="synonym">CSN1</name>
</gene>
<evidence type="ECO:0000250" key="1">
    <source>
        <dbReference type="UniProtKB" id="O97943"/>
    </source>
</evidence>
<evidence type="ECO:0000250" key="2">
    <source>
        <dbReference type="UniProtKB" id="P02662"/>
    </source>
</evidence>
<evidence type="ECO:0000269" key="3">
    <source>
    </source>
</evidence>
<evidence type="ECO:0000269" key="4">
    <source>
    </source>
</evidence>
<evidence type="ECO:0000269" key="5">
    <source>
    </source>
</evidence>
<evidence type="ECO:0000269" key="6">
    <source>
    </source>
</evidence>
<evidence type="ECO:0000269" key="7">
    <source>
    </source>
</evidence>
<evidence type="ECO:0000269" key="8">
    <source>
    </source>
</evidence>
<evidence type="ECO:0000303" key="9">
    <source>
    </source>
</evidence>
<evidence type="ECO:0000303" key="10">
    <source ref="3"/>
</evidence>
<evidence type="ECO:0000303" key="11">
    <source ref="7"/>
</evidence>
<evidence type="ECO:0000305" key="12"/>
<evidence type="ECO:0007744" key="13">
    <source>
    </source>
</evidence>
<name>CASA1_HUMAN</name>
<accession>P47710</accession>
<accession>A1A510</accession>
<accession>A1A511</accession>
<accession>E9PB60</accession>
<accession>Q4PNR5</accession>
<proteinExistence type="evidence at protein level"/>
<sequence length="185" mass="21671">MRLLILTCLVAVALARPKLPLRYPERLQNPSESSEPIPLESREEYMNGMNRQRNILREKQTDEIKDTRNESTQNCVVAEPEKMESSISSSSEEMSLSKCAEQFCRLNEYNQLQLQAAHAQEQIRRMNENSHVQVPFQQLNQLAAYPYAVWYYPQIMQYVPFPPFSDISNPTAHENYEKNNVMLQW</sequence>
<keyword id="KW-0025">Alternative splicing</keyword>
<keyword id="KW-0903">Direct protein sequencing</keyword>
<keyword id="KW-1015">Disulfide bond</keyword>
<keyword id="KW-0494">Milk protein</keyword>
<keyword id="KW-0597">Phosphoprotein</keyword>
<keyword id="KW-1267">Proteomics identification</keyword>
<keyword id="KW-1185">Reference proteome</keyword>
<keyword id="KW-0964">Secreted</keyword>
<keyword id="KW-0732">Signal</keyword>
<feature type="signal peptide" evidence="7 8">
    <location>
        <begin position="1"/>
        <end position="15"/>
    </location>
</feature>
<feature type="chain" id="PRO_0000004450" description="Alpha-S1-casein">
    <location>
        <begin position="16"/>
        <end position="185"/>
    </location>
</feature>
<feature type="peptide" id="PRO_0000004451" description="Casoxin-D">
    <location>
        <begin position="158"/>
        <end position="164"/>
    </location>
</feature>
<feature type="modified residue" description="Phosphoserine" evidence="6">
    <location>
        <position position="31"/>
    </location>
</feature>
<feature type="modified residue" description="Phosphoserine" evidence="3 5 6">
    <location>
        <position position="33"/>
    </location>
</feature>
<feature type="modified residue" description="Phosphoserine" evidence="3 5 6 13">
    <location>
        <position position="41"/>
    </location>
</feature>
<feature type="modified residue" description="Phosphoserine" evidence="2">
    <location>
        <position position="71"/>
    </location>
</feature>
<feature type="modified residue" description="Phosphoserine" evidence="1">
    <location>
        <position position="85"/>
    </location>
</feature>
<feature type="modified residue" description="Phosphoserine" evidence="6">
    <location>
        <position position="86"/>
    </location>
</feature>
<feature type="modified residue" description="Phosphoserine" evidence="5 6">
    <location>
        <position position="88"/>
    </location>
</feature>
<feature type="modified residue" description="Phosphoserine" evidence="6">
    <location>
        <position position="89"/>
    </location>
</feature>
<feature type="modified residue" description="Phosphoserine" evidence="5 6">
    <location>
        <position position="90"/>
    </location>
</feature>
<feature type="modified residue" description="Phosphoserine" evidence="6">
    <location>
        <position position="91"/>
    </location>
</feature>
<feature type="splice variant" id="VSP_000795" description="In isoform 2 and isoform 4." evidence="9 10 11">
    <location>
        <position position="52"/>
    </location>
</feature>
<feature type="splice variant" id="VSP_000796" description="In isoform 3." evidence="9 11">
    <location>
        <begin position="66"/>
        <end position="73"/>
    </location>
</feature>
<feature type="splice variant" id="VSP_046130" description="In isoform 4." evidence="10">
    <location>
        <begin position="93"/>
        <end position="100"/>
    </location>
</feature>
<feature type="sequence variant" id="VAR_048614" description="In dbSNP:rs10030475." evidence="4">
    <original>A</original>
    <variation>V</variation>
    <location>
        <position position="117"/>
    </location>
</feature>
<feature type="sequence conflict" description="In Ref. 3; AAY68392." evidence="12" ref="3">
    <original>P</original>
    <variation>S</variation>
    <location>
        <position position="80"/>
    </location>
</feature>
<dbReference type="EMBL" id="X78416">
    <property type="protein sequence ID" value="CAA55185.1"/>
    <property type="molecule type" value="mRNA"/>
</dbReference>
<dbReference type="EMBL" id="U23157">
    <property type="protein sequence ID" value="AAA69477.1"/>
    <property type="molecule type" value="mRNA"/>
</dbReference>
<dbReference type="EMBL" id="DQ064604">
    <property type="protein sequence ID" value="AAY68392.1"/>
    <property type="molecule type" value="mRNA"/>
</dbReference>
<dbReference type="EMBL" id="AC108941">
    <property type="status" value="NOT_ANNOTATED_CDS"/>
    <property type="molecule type" value="Genomic_DNA"/>
</dbReference>
<dbReference type="EMBL" id="CH471057">
    <property type="protein sequence ID" value="EAX05599.1"/>
    <property type="molecule type" value="Genomic_DNA"/>
</dbReference>
<dbReference type="EMBL" id="BC128227">
    <property type="protein sequence ID" value="AAI28228.1"/>
    <property type="molecule type" value="mRNA"/>
</dbReference>
<dbReference type="EMBL" id="BC128228">
    <property type="protein sequence ID" value="AAI28229.1"/>
    <property type="molecule type" value="mRNA"/>
</dbReference>
<dbReference type="EMBL" id="X98084">
    <property type="protein sequence ID" value="CAA66708.1"/>
    <property type="molecule type" value="mRNA"/>
</dbReference>
<dbReference type="CCDS" id="CCDS47067.1">
    <molecule id="P47710-1"/>
</dbReference>
<dbReference type="CCDS" id="CCDS54769.1">
    <molecule id="P47710-4"/>
</dbReference>
<dbReference type="PIR" id="S56013">
    <property type="entry name" value="S56013"/>
</dbReference>
<dbReference type="RefSeq" id="NP_001020275.1">
    <molecule id="P47710-4"/>
    <property type="nucleotide sequence ID" value="NM_001025104.2"/>
</dbReference>
<dbReference type="RefSeq" id="NP_001881.1">
    <molecule id="P47710-1"/>
    <property type="nucleotide sequence ID" value="NM_001890.2"/>
</dbReference>
<dbReference type="RefSeq" id="XP_006714152.1">
    <molecule id="P47710-2"/>
    <property type="nucleotide sequence ID" value="XM_006714089.3"/>
</dbReference>
<dbReference type="RefSeq" id="XP_006714153.1">
    <molecule id="P47710-3"/>
    <property type="nucleotide sequence ID" value="XM_006714090.3"/>
</dbReference>
<dbReference type="RefSeq" id="XP_054204946.1">
    <molecule id="P47710-2"/>
    <property type="nucleotide sequence ID" value="XM_054348971.1"/>
</dbReference>
<dbReference type="RefSeq" id="XP_054204947.1">
    <molecule id="P47710-3"/>
    <property type="nucleotide sequence ID" value="XM_054348972.1"/>
</dbReference>
<dbReference type="SMR" id="P47710"/>
<dbReference type="BioGRID" id="107833">
    <property type="interactions" value="32"/>
</dbReference>
<dbReference type="CORUM" id="P47710"/>
<dbReference type="FunCoup" id="P47710">
    <property type="interactions" value="30"/>
</dbReference>
<dbReference type="IntAct" id="P47710">
    <property type="interactions" value="22"/>
</dbReference>
<dbReference type="STRING" id="9606.ENSP00000246891"/>
<dbReference type="Allergome" id="1064">
    <property type="allergen name" value="Hom s 8"/>
</dbReference>
<dbReference type="GlyConnect" id="2932">
    <property type="glycosylation" value="81 N-Linked glycans (1 site)"/>
</dbReference>
<dbReference type="GlyCosmos" id="P47710">
    <property type="glycosylation" value="1 site, 93 glycans"/>
</dbReference>
<dbReference type="GlyGen" id="P47710">
    <property type="glycosylation" value="1 site, 86 N-linked glycans (1 site)"/>
</dbReference>
<dbReference type="iPTMnet" id="P47710"/>
<dbReference type="PhosphoSitePlus" id="P47710"/>
<dbReference type="SwissPalm" id="P47710"/>
<dbReference type="BioMuta" id="CSN1S1"/>
<dbReference type="MassIVE" id="P47710"/>
<dbReference type="PaxDb" id="9606-ENSP00000246891"/>
<dbReference type="PeptideAtlas" id="P47710"/>
<dbReference type="ProteomicsDB" id="19152"/>
<dbReference type="ProteomicsDB" id="55785">
    <molecule id="P47710-1"/>
</dbReference>
<dbReference type="ProteomicsDB" id="55786">
    <molecule id="P47710-2"/>
</dbReference>
<dbReference type="ProteomicsDB" id="55787">
    <molecule id="P47710-3"/>
</dbReference>
<dbReference type="Antibodypedia" id="24253">
    <property type="antibodies" value="179 antibodies from 22 providers"/>
</dbReference>
<dbReference type="DNASU" id="1446"/>
<dbReference type="Ensembl" id="ENST00000246891.9">
    <molecule id="P47710-1"/>
    <property type="protein sequence ID" value="ENSP00000246891.4"/>
    <property type="gene ID" value="ENSG00000126545.14"/>
</dbReference>
<dbReference type="Ensembl" id="ENST00000507763.5">
    <molecule id="P47710-4"/>
    <property type="protein sequence ID" value="ENSP00000422611.1"/>
    <property type="gene ID" value="ENSG00000126545.14"/>
</dbReference>
<dbReference type="GeneID" id="1446"/>
<dbReference type="KEGG" id="hsa:1446"/>
<dbReference type="MANE-Select" id="ENST00000246891.9">
    <property type="protein sequence ID" value="ENSP00000246891.4"/>
    <property type="RefSeq nucleotide sequence ID" value="NM_001890.2"/>
    <property type="RefSeq protein sequence ID" value="NP_001881.1"/>
</dbReference>
<dbReference type="UCSC" id="uc003hep.2">
    <molecule id="P47710-1"/>
    <property type="organism name" value="human"/>
</dbReference>
<dbReference type="AGR" id="HGNC:2445"/>
<dbReference type="CTD" id="1446"/>
<dbReference type="DisGeNET" id="1446"/>
<dbReference type="GeneCards" id="CSN1S1"/>
<dbReference type="HGNC" id="HGNC:2445">
    <property type="gene designation" value="CSN1S1"/>
</dbReference>
<dbReference type="HPA" id="ENSG00000126545">
    <property type="expression patterns" value="Tissue enriched (breast)"/>
</dbReference>
<dbReference type="MIM" id="115450">
    <property type="type" value="gene"/>
</dbReference>
<dbReference type="neXtProt" id="NX_P47710"/>
<dbReference type="OpenTargets" id="ENSG00000126545"/>
<dbReference type="PharmGKB" id="PA26948"/>
<dbReference type="VEuPathDB" id="HostDB:ENSG00000126545"/>
<dbReference type="eggNOG" id="ENOG502TEWT">
    <property type="taxonomic scope" value="Eukaryota"/>
</dbReference>
<dbReference type="GeneTree" id="ENSGT00390000017378"/>
<dbReference type="InParanoid" id="P47710"/>
<dbReference type="OMA" id="AYLPAPW"/>
<dbReference type="OrthoDB" id="9635074at2759"/>
<dbReference type="PAN-GO" id="P47710">
    <property type="GO annotations" value="5 GO annotations based on evolutionary models"/>
</dbReference>
<dbReference type="PhylomeDB" id="P47710"/>
<dbReference type="TreeFam" id="TF340763"/>
<dbReference type="PathwayCommons" id="P47710"/>
<dbReference type="Reactome" id="R-HSA-5223345">
    <property type="pathway name" value="Miscellaneous transport and binding events"/>
</dbReference>
<dbReference type="SignaLink" id="P47710"/>
<dbReference type="SIGNOR" id="P47710"/>
<dbReference type="BioGRID-ORCS" id="1446">
    <property type="hits" value="16 hits in 1140 CRISPR screens"/>
</dbReference>
<dbReference type="CD-CODE" id="232F8A39">
    <property type="entry name" value="P-body"/>
</dbReference>
<dbReference type="GeneWiki" id="CSN1S1"/>
<dbReference type="GenomeRNAi" id="1446"/>
<dbReference type="Pharos" id="P47710">
    <property type="development level" value="Tbio"/>
</dbReference>
<dbReference type="PRO" id="PR:P47710"/>
<dbReference type="Proteomes" id="UP000005640">
    <property type="component" value="Chromosome 4"/>
</dbReference>
<dbReference type="RNAct" id="P47710">
    <property type="molecule type" value="protein"/>
</dbReference>
<dbReference type="Bgee" id="ENSG00000126545">
    <property type="expression patterns" value="Expressed in male germ line stem cell (sensu Vertebrata) in testis and 102 other cell types or tissues"/>
</dbReference>
<dbReference type="ExpressionAtlas" id="P47710">
    <property type="expression patterns" value="baseline and differential"/>
</dbReference>
<dbReference type="GO" id="GO:0005576">
    <property type="term" value="C:extracellular region"/>
    <property type="evidence" value="ECO:0000304"/>
    <property type="project" value="Reactome"/>
</dbReference>
<dbReference type="GO" id="GO:0005615">
    <property type="term" value="C:extracellular space"/>
    <property type="evidence" value="ECO:0007005"/>
    <property type="project" value="UniProtKB"/>
</dbReference>
<dbReference type="GO" id="GO:1903496">
    <property type="term" value="P:response to 11-deoxycorticosterone"/>
    <property type="evidence" value="ECO:0000318"/>
    <property type="project" value="GO_Central"/>
</dbReference>
<dbReference type="GO" id="GO:1903494">
    <property type="term" value="P:response to dehydroepiandrosterone"/>
    <property type="evidence" value="ECO:0000318"/>
    <property type="project" value="GO_Central"/>
</dbReference>
<dbReference type="GO" id="GO:0032355">
    <property type="term" value="P:response to estradiol"/>
    <property type="evidence" value="ECO:0000318"/>
    <property type="project" value="GO_Central"/>
</dbReference>
<dbReference type="GO" id="GO:0032570">
    <property type="term" value="P:response to progesterone"/>
    <property type="evidence" value="ECO:0000318"/>
    <property type="project" value="GO_Central"/>
</dbReference>
<dbReference type="DisProt" id="DP02005"/>
<dbReference type="InterPro" id="IPR026999">
    <property type="entry name" value="Alpha-s1_casein"/>
</dbReference>
<dbReference type="InterPro" id="IPR031305">
    <property type="entry name" value="Casein_CS"/>
</dbReference>
<dbReference type="PANTHER" id="PTHR10240">
    <property type="entry name" value="ALPHA-S1-CASEIN"/>
    <property type="match status" value="1"/>
</dbReference>
<dbReference type="PANTHER" id="PTHR10240:SF0">
    <property type="entry name" value="ALPHA-S1-CASEIN"/>
    <property type="match status" value="1"/>
</dbReference>
<dbReference type="PROSITE" id="PS00306">
    <property type="entry name" value="CASEIN_ALPHA_BETA"/>
    <property type="match status" value="1"/>
</dbReference>
<comment type="function">
    <text>Important role in the capacity of milk to transport calcium phosphate.</text>
</comment>
<comment type="function">
    <text>Casoxin D acts as opioid antagonist and has vasorelaxing activity mediated by bradykinin B1 receptors.</text>
</comment>
<comment type="subunit">
    <text>Heteromultimers of alpha-s1 casein and kappa-casein; disulfide-linked.</text>
</comment>
<comment type="interaction">
    <interactant intactId="EBI-2433045">
        <id>P47710</id>
    </interactant>
    <interactant intactId="EBI-947187">
        <id>Q9UHD9</id>
        <label>UBQLN2</label>
    </interactant>
    <organismsDiffer>false</organismsDiffer>
    <experiments>3</experiments>
</comment>
<comment type="subcellular location">
    <subcellularLocation>
        <location>Secreted</location>
    </subcellularLocation>
</comment>
<comment type="alternative products">
    <event type="alternative splicing"/>
    <isoform>
        <id>P47710-1</id>
        <name>1</name>
        <sequence type="displayed"/>
    </isoform>
    <isoform>
        <id>P47710-2</id>
        <name>2</name>
        <sequence type="described" ref="VSP_000795"/>
    </isoform>
    <isoform>
        <id>P47710-3</id>
        <name>3</name>
        <sequence type="described" ref="VSP_000796"/>
    </isoform>
    <isoform>
        <id>P47710-4</id>
        <name>4</name>
        <sequence type="described" ref="VSP_000795 VSP_046130"/>
    </isoform>
</comment>
<comment type="tissue specificity">
    <text>Mammary gland specific. Secreted in milk.</text>
</comment>
<comment type="PTM">
    <text>Not glycosylated.</text>
</comment>
<comment type="miscellaneous">
    <text>In milk, the alpha s1- and beta-caseins precipitate in presence of calcium (so-called calcium-sensitive caseins). Kappa-casein prevents the precipitation of the other caseins by calcium through the formation of large stable colloidal particles termed micelles.</text>
</comment>
<comment type="similarity">
    <text evidence="12">Belongs to the alpha-casein family.</text>
</comment>
<comment type="online information" name="Protein Spotlight">
    <link uri="https://www.proteinspotlight.org/back_issues/016"/>
    <text>Of buttons, digestion and glue - Issue 16 of November 2001</text>
</comment>
<protein>
    <recommendedName>
        <fullName>Alpha-S1-casein</fullName>
    </recommendedName>
    <component>
        <recommendedName>
            <fullName>Casoxin-D</fullName>
        </recommendedName>
    </component>
</protein>
<organism>
    <name type="scientific">Homo sapiens</name>
    <name type="common">Human</name>
    <dbReference type="NCBI Taxonomy" id="9606"/>
    <lineage>
        <taxon>Eukaryota</taxon>
        <taxon>Metazoa</taxon>
        <taxon>Chordata</taxon>
        <taxon>Craniata</taxon>
        <taxon>Vertebrata</taxon>
        <taxon>Euteleostomi</taxon>
        <taxon>Mammalia</taxon>
        <taxon>Eutheria</taxon>
        <taxon>Euarchontoglires</taxon>
        <taxon>Primates</taxon>
        <taxon>Haplorrhini</taxon>
        <taxon>Catarrhini</taxon>
        <taxon>Hominidae</taxon>
        <taxon>Homo</taxon>
    </lineage>
</organism>